<feature type="chain" id="PRO_1000188109" description="Small ribosomal subunit biogenesis GTPase RsgA">
    <location>
        <begin position="1"/>
        <end position="307"/>
    </location>
</feature>
<feature type="domain" description="CP-type G" evidence="2">
    <location>
        <begin position="85"/>
        <end position="242"/>
    </location>
</feature>
<feature type="region of interest" description="Disordered" evidence="3">
    <location>
        <begin position="1"/>
        <end position="20"/>
    </location>
</feature>
<feature type="compositionally biased region" description="Polar residues" evidence="3">
    <location>
        <begin position="10"/>
        <end position="20"/>
    </location>
</feature>
<feature type="binding site" evidence="1">
    <location>
        <begin position="135"/>
        <end position="138"/>
    </location>
    <ligand>
        <name>GTP</name>
        <dbReference type="ChEBI" id="CHEBI:37565"/>
    </ligand>
</feature>
<feature type="binding site" evidence="1">
    <location>
        <begin position="184"/>
        <end position="192"/>
    </location>
    <ligand>
        <name>GTP</name>
        <dbReference type="ChEBI" id="CHEBI:37565"/>
    </ligand>
</feature>
<feature type="binding site" evidence="1">
    <location>
        <position position="266"/>
    </location>
    <ligand>
        <name>Zn(2+)</name>
        <dbReference type="ChEBI" id="CHEBI:29105"/>
    </ligand>
</feature>
<feature type="binding site" evidence="1">
    <location>
        <position position="271"/>
    </location>
    <ligand>
        <name>Zn(2+)</name>
        <dbReference type="ChEBI" id="CHEBI:29105"/>
    </ligand>
</feature>
<feature type="binding site" evidence="1">
    <location>
        <position position="273"/>
    </location>
    <ligand>
        <name>Zn(2+)</name>
        <dbReference type="ChEBI" id="CHEBI:29105"/>
    </ligand>
</feature>
<feature type="binding site" evidence="1">
    <location>
        <position position="279"/>
    </location>
    <ligand>
        <name>Zn(2+)</name>
        <dbReference type="ChEBI" id="CHEBI:29105"/>
    </ligand>
</feature>
<gene>
    <name evidence="1" type="primary">rsgA</name>
    <name type="ordered locus">NMC0257</name>
</gene>
<proteinExistence type="inferred from homology"/>
<comment type="function">
    <text evidence="1">One of several proteins that assist in the late maturation steps of the functional core of the 30S ribosomal subunit. Helps release RbfA from mature subunits. May play a role in the assembly of ribosomal proteins into the subunit. Circularly permuted GTPase that catalyzes slow GTP hydrolysis, GTPase activity is stimulated by the 30S ribosomal subunit.</text>
</comment>
<comment type="cofactor">
    <cofactor evidence="1">
        <name>Zn(2+)</name>
        <dbReference type="ChEBI" id="CHEBI:29105"/>
    </cofactor>
    <text evidence="1">Binds 1 zinc ion per subunit.</text>
</comment>
<comment type="subunit">
    <text evidence="1">Monomer. Associates with 30S ribosomal subunit, binds 16S rRNA.</text>
</comment>
<comment type="subcellular location">
    <subcellularLocation>
        <location evidence="1">Cytoplasm</location>
    </subcellularLocation>
</comment>
<comment type="similarity">
    <text evidence="1">Belongs to the TRAFAC class YlqF/YawG GTPase family. RsgA subfamily.</text>
</comment>
<organism>
    <name type="scientific">Neisseria meningitidis serogroup C / serotype 2a (strain ATCC 700532 / DSM 15464 / FAM18)</name>
    <dbReference type="NCBI Taxonomy" id="272831"/>
    <lineage>
        <taxon>Bacteria</taxon>
        <taxon>Pseudomonadati</taxon>
        <taxon>Pseudomonadota</taxon>
        <taxon>Betaproteobacteria</taxon>
        <taxon>Neisseriales</taxon>
        <taxon>Neisseriaceae</taxon>
        <taxon>Neisseria</taxon>
    </lineage>
</organism>
<dbReference type="EC" id="3.6.1.-" evidence="1"/>
<dbReference type="EMBL" id="AM421808">
    <property type="protein sequence ID" value="CAM09571.1"/>
    <property type="molecule type" value="Genomic_DNA"/>
</dbReference>
<dbReference type="RefSeq" id="WP_002247948.1">
    <property type="nucleotide sequence ID" value="NC_008767.1"/>
</dbReference>
<dbReference type="SMR" id="A1KRU2"/>
<dbReference type="KEGG" id="nmc:NMC0257"/>
<dbReference type="HOGENOM" id="CLU_033617_2_0_4"/>
<dbReference type="Proteomes" id="UP000002286">
    <property type="component" value="Chromosome"/>
</dbReference>
<dbReference type="GO" id="GO:0005737">
    <property type="term" value="C:cytoplasm"/>
    <property type="evidence" value="ECO:0007669"/>
    <property type="project" value="UniProtKB-SubCell"/>
</dbReference>
<dbReference type="GO" id="GO:0005525">
    <property type="term" value="F:GTP binding"/>
    <property type="evidence" value="ECO:0007669"/>
    <property type="project" value="UniProtKB-UniRule"/>
</dbReference>
<dbReference type="GO" id="GO:0003924">
    <property type="term" value="F:GTPase activity"/>
    <property type="evidence" value="ECO:0007669"/>
    <property type="project" value="UniProtKB-UniRule"/>
</dbReference>
<dbReference type="GO" id="GO:0046872">
    <property type="term" value="F:metal ion binding"/>
    <property type="evidence" value="ECO:0007669"/>
    <property type="project" value="UniProtKB-KW"/>
</dbReference>
<dbReference type="GO" id="GO:0019843">
    <property type="term" value="F:rRNA binding"/>
    <property type="evidence" value="ECO:0007669"/>
    <property type="project" value="UniProtKB-KW"/>
</dbReference>
<dbReference type="GO" id="GO:0042274">
    <property type="term" value="P:ribosomal small subunit biogenesis"/>
    <property type="evidence" value="ECO:0007669"/>
    <property type="project" value="UniProtKB-UniRule"/>
</dbReference>
<dbReference type="CDD" id="cd01854">
    <property type="entry name" value="YjeQ_EngC"/>
    <property type="match status" value="1"/>
</dbReference>
<dbReference type="Gene3D" id="3.40.50.300">
    <property type="entry name" value="P-loop containing nucleotide triphosphate hydrolases"/>
    <property type="match status" value="1"/>
</dbReference>
<dbReference type="Gene3D" id="1.10.40.50">
    <property type="entry name" value="Probable gtpase engc, domain 3"/>
    <property type="match status" value="1"/>
</dbReference>
<dbReference type="HAMAP" id="MF_01820">
    <property type="entry name" value="GTPase_RsgA"/>
    <property type="match status" value="1"/>
</dbReference>
<dbReference type="InterPro" id="IPR030378">
    <property type="entry name" value="G_CP_dom"/>
</dbReference>
<dbReference type="InterPro" id="IPR027417">
    <property type="entry name" value="P-loop_NTPase"/>
</dbReference>
<dbReference type="InterPro" id="IPR004881">
    <property type="entry name" value="Ribosome_biogen_GTPase_RsgA"/>
</dbReference>
<dbReference type="InterPro" id="IPR010914">
    <property type="entry name" value="RsgA_GTPase_dom"/>
</dbReference>
<dbReference type="NCBIfam" id="TIGR00157">
    <property type="entry name" value="ribosome small subunit-dependent GTPase A"/>
    <property type="match status" value="1"/>
</dbReference>
<dbReference type="PANTHER" id="PTHR32120">
    <property type="entry name" value="SMALL RIBOSOMAL SUBUNIT BIOGENESIS GTPASE RSGA"/>
    <property type="match status" value="1"/>
</dbReference>
<dbReference type="PANTHER" id="PTHR32120:SF11">
    <property type="entry name" value="SMALL RIBOSOMAL SUBUNIT BIOGENESIS GTPASE RSGA 1, MITOCHONDRIAL-RELATED"/>
    <property type="match status" value="1"/>
</dbReference>
<dbReference type="Pfam" id="PF03193">
    <property type="entry name" value="RsgA_GTPase"/>
    <property type="match status" value="1"/>
</dbReference>
<dbReference type="SUPFAM" id="SSF52540">
    <property type="entry name" value="P-loop containing nucleoside triphosphate hydrolases"/>
    <property type="match status" value="1"/>
</dbReference>
<dbReference type="PROSITE" id="PS50936">
    <property type="entry name" value="ENGC_GTPASE"/>
    <property type="match status" value="1"/>
</dbReference>
<dbReference type="PROSITE" id="PS51721">
    <property type="entry name" value="G_CP"/>
    <property type="match status" value="1"/>
</dbReference>
<name>RSGA_NEIMF</name>
<evidence type="ECO:0000255" key="1">
    <source>
        <dbReference type="HAMAP-Rule" id="MF_01820"/>
    </source>
</evidence>
<evidence type="ECO:0000255" key="2">
    <source>
        <dbReference type="PROSITE-ProRule" id="PRU01058"/>
    </source>
</evidence>
<evidence type="ECO:0000256" key="3">
    <source>
        <dbReference type="SAM" id="MobiDB-lite"/>
    </source>
</evidence>
<protein>
    <recommendedName>
        <fullName evidence="1">Small ribosomal subunit biogenesis GTPase RsgA</fullName>
        <ecNumber evidence="1">3.6.1.-</ecNumber>
    </recommendedName>
</protein>
<sequence>MPSEHPFSDGISTPNPKETMNDTAQITASYGRRYIVRTPDGTTYEASTRKKRVDFACGDRVRISPVNAEQVVIEDFLPRQSLLYRQDAWKTKLIAANVTQLLIVTAAVPSPSMRLLQRALLAAEAAGIEAVIVLNKADLPETALWREKLKFYETLGYPVIETRALENADLLRPVLQGHSNILLGQSGMGKSTLTNALLGSQTARTGDISAALDSGKHTTTHARLYDLNGETQLIDSPGLQEFGLHHLQAADLPRYFPDFRHLVGQCRFHNCTHRAEPGCAFKAAAETGAASPERLAFLQGITDELPG</sequence>
<reference key="1">
    <citation type="journal article" date="2007" name="PLoS Genet.">
        <title>Meningococcal genetic variation mechanisms viewed through comparative analysis of serogroup C strain FAM18.</title>
        <authorList>
            <person name="Bentley S.D."/>
            <person name="Vernikos G.S."/>
            <person name="Snyder L.A.S."/>
            <person name="Churcher C."/>
            <person name="Arrowsmith C."/>
            <person name="Chillingworth T."/>
            <person name="Cronin A."/>
            <person name="Davis P.H."/>
            <person name="Holroyd N.E."/>
            <person name="Jagels K."/>
            <person name="Maddison M."/>
            <person name="Moule S."/>
            <person name="Rabbinowitsch E."/>
            <person name="Sharp S."/>
            <person name="Unwin L."/>
            <person name="Whitehead S."/>
            <person name="Quail M.A."/>
            <person name="Achtman M."/>
            <person name="Barrell B.G."/>
            <person name="Saunders N.J."/>
            <person name="Parkhill J."/>
        </authorList>
    </citation>
    <scope>NUCLEOTIDE SEQUENCE [LARGE SCALE GENOMIC DNA]</scope>
    <source>
        <strain>ATCC 700532 / DSM 15464 / FAM18</strain>
    </source>
</reference>
<keyword id="KW-0963">Cytoplasm</keyword>
<keyword id="KW-0342">GTP-binding</keyword>
<keyword id="KW-0378">Hydrolase</keyword>
<keyword id="KW-0479">Metal-binding</keyword>
<keyword id="KW-0547">Nucleotide-binding</keyword>
<keyword id="KW-0690">Ribosome biogenesis</keyword>
<keyword id="KW-0694">RNA-binding</keyword>
<keyword id="KW-0699">rRNA-binding</keyword>
<keyword id="KW-0862">Zinc</keyword>
<accession>A1KRU2</accession>